<organism>
    <name type="scientific">Streptococcus pneumoniae (strain ATCC 700669 / Spain 23F-1)</name>
    <dbReference type="NCBI Taxonomy" id="561276"/>
    <lineage>
        <taxon>Bacteria</taxon>
        <taxon>Bacillati</taxon>
        <taxon>Bacillota</taxon>
        <taxon>Bacilli</taxon>
        <taxon>Lactobacillales</taxon>
        <taxon>Streptococcaceae</taxon>
        <taxon>Streptococcus</taxon>
    </lineage>
</organism>
<protein>
    <recommendedName>
        <fullName evidence="1">Phosphatidylglycerol--prolipoprotein diacylglyceryl transferase</fullName>
        <ecNumber evidence="1">2.5.1.145</ecNumber>
    </recommendedName>
</protein>
<proteinExistence type="inferred from homology"/>
<reference key="1">
    <citation type="journal article" date="2009" name="J. Bacteriol.">
        <title>Role of conjugative elements in the evolution of the multidrug-resistant pandemic clone Streptococcus pneumoniae Spain23F ST81.</title>
        <authorList>
            <person name="Croucher N.J."/>
            <person name="Walker D."/>
            <person name="Romero P."/>
            <person name="Lennard N."/>
            <person name="Paterson G.K."/>
            <person name="Bason N.C."/>
            <person name="Mitchell A.M."/>
            <person name="Quail M.A."/>
            <person name="Andrew P.W."/>
            <person name="Parkhill J."/>
            <person name="Bentley S.D."/>
            <person name="Mitchell T.J."/>
        </authorList>
    </citation>
    <scope>NUCLEOTIDE SEQUENCE [LARGE SCALE GENOMIC DNA]</scope>
    <source>
        <strain>ATCC 700669 / Spain 23F-1</strain>
    </source>
</reference>
<gene>
    <name evidence="1" type="primary">lgt</name>
    <name type="ordered locus">SPN23F13770</name>
</gene>
<dbReference type="EC" id="2.5.1.145" evidence="1"/>
<dbReference type="EMBL" id="FM211187">
    <property type="protein sequence ID" value="CAR69176.1"/>
    <property type="molecule type" value="Genomic_DNA"/>
</dbReference>
<dbReference type="RefSeq" id="WP_000886661.1">
    <property type="nucleotide sequence ID" value="NC_011900.1"/>
</dbReference>
<dbReference type="SMR" id="B8ZKX1"/>
<dbReference type="KEGG" id="sne:SPN23F13770"/>
<dbReference type="HOGENOM" id="CLU_013386_0_1_9"/>
<dbReference type="UniPathway" id="UPA00664"/>
<dbReference type="GO" id="GO:0005886">
    <property type="term" value="C:plasma membrane"/>
    <property type="evidence" value="ECO:0007669"/>
    <property type="project" value="UniProtKB-SubCell"/>
</dbReference>
<dbReference type="GO" id="GO:0008961">
    <property type="term" value="F:phosphatidylglycerol-prolipoprotein diacylglyceryl transferase activity"/>
    <property type="evidence" value="ECO:0007669"/>
    <property type="project" value="UniProtKB-UniRule"/>
</dbReference>
<dbReference type="GO" id="GO:0042158">
    <property type="term" value="P:lipoprotein biosynthetic process"/>
    <property type="evidence" value="ECO:0007669"/>
    <property type="project" value="UniProtKB-UniRule"/>
</dbReference>
<dbReference type="HAMAP" id="MF_01147">
    <property type="entry name" value="Lgt"/>
    <property type="match status" value="1"/>
</dbReference>
<dbReference type="InterPro" id="IPR001640">
    <property type="entry name" value="Lgt"/>
</dbReference>
<dbReference type="NCBIfam" id="TIGR00544">
    <property type="entry name" value="lgt"/>
    <property type="match status" value="1"/>
</dbReference>
<dbReference type="PANTHER" id="PTHR30589:SF0">
    <property type="entry name" value="PHOSPHATIDYLGLYCEROL--PROLIPOPROTEIN DIACYLGLYCERYL TRANSFERASE"/>
    <property type="match status" value="1"/>
</dbReference>
<dbReference type="PANTHER" id="PTHR30589">
    <property type="entry name" value="PROLIPOPROTEIN DIACYLGLYCERYL TRANSFERASE"/>
    <property type="match status" value="1"/>
</dbReference>
<dbReference type="Pfam" id="PF01790">
    <property type="entry name" value="LGT"/>
    <property type="match status" value="1"/>
</dbReference>
<dbReference type="PROSITE" id="PS01311">
    <property type="entry name" value="LGT"/>
    <property type="match status" value="1"/>
</dbReference>
<feature type="chain" id="PRO_1000164151" description="Phosphatidylglycerol--prolipoprotein diacylglyceryl transferase">
    <location>
        <begin position="1"/>
        <end position="262"/>
    </location>
</feature>
<feature type="transmembrane region" description="Helical" evidence="1">
    <location>
        <begin position="9"/>
        <end position="29"/>
    </location>
</feature>
<feature type="transmembrane region" description="Helical" evidence="1">
    <location>
        <begin position="41"/>
        <end position="61"/>
    </location>
</feature>
<feature type="transmembrane region" description="Helical" evidence="1">
    <location>
        <begin position="80"/>
        <end position="100"/>
    </location>
</feature>
<feature type="transmembrane region" description="Helical" evidence="1">
    <location>
        <begin position="109"/>
        <end position="129"/>
    </location>
</feature>
<feature type="transmembrane region" description="Helical" evidence="1">
    <location>
        <begin position="167"/>
        <end position="187"/>
    </location>
</feature>
<feature type="transmembrane region" description="Helical" evidence="1">
    <location>
        <begin position="197"/>
        <end position="217"/>
    </location>
</feature>
<feature type="transmembrane region" description="Helical" evidence="1">
    <location>
        <begin position="226"/>
        <end position="246"/>
    </location>
</feature>
<feature type="binding site" evidence="1">
    <location>
        <position position="131"/>
    </location>
    <ligand>
        <name>a 1,2-diacyl-sn-glycero-3-phospho-(1'-sn-glycerol)</name>
        <dbReference type="ChEBI" id="CHEBI:64716"/>
    </ligand>
</feature>
<evidence type="ECO:0000255" key="1">
    <source>
        <dbReference type="HAMAP-Rule" id="MF_01147"/>
    </source>
</evidence>
<sequence length="262" mass="30307">MLDPIAIQLGPLAIRWYALCIVTGLILAVYLTMKEAPRKKIIPDDILDFILVAFPLAILGARLYYVIFRFDYYSQNLGEIFAIWNGGLAIYGGLITGALVLYIFADRKLINTWDFLDIAAPSVMIAQSLGRWGNFFNQEAYGATVDNLDYLPGFIRDQMYIEGSYRQPTFLYESLWNLLGFALILIFRRKWKSLRRGHITAFYLIWYGFGRMVIEGMRTDSLMFFGLRVSQWLSVVFIGLGIMIVIYQNRKKAPYYITEEEK</sequence>
<name>LGT_STRPJ</name>
<accession>B8ZKX1</accession>
<keyword id="KW-1003">Cell membrane</keyword>
<keyword id="KW-0472">Membrane</keyword>
<keyword id="KW-0808">Transferase</keyword>
<keyword id="KW-0812">Transmembrane</keyword>
<keyword id="KW-1133">Transmembrane helix</keyword>
<comment type="function">
    <text evidence="1">Catalyzes the transfer of the diacylglyceryl group from phosphatidylglycerol to the sulfhydryl group of the N-terminal cysteine of a prolipoprotein, the first step in the formation of mature lipoproteins.</text>
</comment>
<comment type="catalytic activity">
    <reaction evidence="1">
        <text>L-cysteinyl-[prolipoprotein] + a 1,2-diacyl-sn-glycero-3-phospho-(1'-sn-glycerol) = an S-1,2-diacyl-sn-glyceryl-L-cysteinyl-[prolipoprotein] + sn-glycerol 1-phosphate + H(+)</text>
        <dbReference type="Rhea" id="RHEA:56712"/>
        <dbReference type="Rhea" id="RHEA-COMP:14679"/>
        <dbReference type="Rhea" id="RHEA-COMP:14680"/>
        <dbReference type="ChEBI" id="CHEBI:15378"/>
        <dbReference type="ChEBI" id="CHEBI:29950"/>
        <dbReference type="ChEBI" id="CHEBI:57685"/>
        <dbReference type="ChEBI" id="CHEBI:64716"/>
        <dbReference type="ChEBI" id="CHEBI:140658"/>
        <dbReference type="EC" id="2.5.1.145"/>
    </reaction>
</comment>
<comment type="pathway">
    <text evidence="1">Protein modification; lipoprotein biosynthesis (diacylglyceryl transfer).</text>
</comment>
<comment type="subcellular location">
    <subcellularLocation>
        <location evidence="1">Cell membrane</location>
        <topology evidence="1">Multi-pass membrane protein</topology>
    </subcellularLocation>
</comment>
<comment type="similarity">
    <text evidence="1">Belongs to the Lgt family.</text>
</comment>